<protein>
    <recommendedName>
        <fullName evidence="1">Lipoate-protein ligase A</fullName>
        <ecNumber evidence="1">6.3.1.20</ecNumber>
    </recommendedName>
    <alternativeName>
        <fullName evidence="1">Lipoate--protein ligase</fullName>
    </alternativeName>
</protein>
<dbReference type="EC" id="6.3.1.20" evidence="1"/>
<dbReference type="EMBL" id="CP001063">
    <property type="protein sequence ID" value="ACD09645.1"/>
    <property type="molecule type" value="Genomic_DNA"/>
</dbReference>
<dbReference type="RefSeq" id="WP_000105858.1">
    <property type="nucleotide sequence ID" value="NC_010658.1"/>
</dbReference>
<dbReference type="SMR" id="B2TZR8"/>
<dbReference type="STRING" id="344609.SbBS512_E4933"/>
<dbReference type="KEGG" id="sbc:SbBS512_E4933"/>
<dbReference type="HOGENOM" id="CLU_022986_0_1_6"/>
<dbReference type="UniPathway" id="UPA00537">
    <property type="reaction ID" value="UER00594"/>
</dbReference>
<dbReference type="UniPathway" id="UPA00537">
    <property type="reaction ID" value="UER00595"/>
</dbReference>
<dbReference type="Proteomes" id="UP000001030">
    <property type="component" value="Chromosome"/>
</dbReference>
<dbReference type="GO" id="GO:0005829">
    <property type="term" value="C:cytosol"/>
    <property type="evidence" value="ECO:0007669"/>
    <property type="project" value="TreeGrafter"/>
</dbReference>
<dbReference type="GO" id="GO:0005524">
    <property type="term" value="F:ATP binding"/>
    <property type="evidence" value="ECO:0007669"/>
    <property type="project" value="UniProtKB-KW"/>
</dbReference>
<dbReference type="GO" id="GO:0016979">
    <property type="term" value="F:lipoate-protein ligase activity"/>
    <property type="evidence" value="ECO:0007669"/>
    <property type="project" value="UniProtKB-UniRule"/>
</dbReference>
<dbReference type="GO" id="GO:0017118">
    <property type="term" value="F:lipoyltransferase activity"/>
    <property type="evidence" value="ECO:0007669"/>
    <property type="project" value="TreeGrafter"/>
</dbReference>
<dbReference type="GO" id="GO:0036211">
    <property type="term" value="P:protein modification process"/>
    <property type="evidence" value="ECO:0007669"/>
    <property type="project" value="InterPro"/>
</dbReference>
<dbReference type="CDD" id="cd16435">
    <property type="entry name" value="BPL_LplA_LipB"/>
    <property type="match status" value="1"/>
</dbReference>
<dbReference type="FunFam" id="3.30.390.50:FF:000002">
    <property type="entry name" value="Lipoate-protein ligase A"/>
    <property type="match status" value="1"/>
</dbReference>
<dbReference type="FunFam" id="3.30.930.10:FF:000024">
    <property type="entry name" value="Lipoate-protein ligase A"/>
    <property type="match status" value="1"/>
</dbReference>
<dbReference type="Gene3D" id="3.30.930.10">
    <property type="entry name" value="Bira Bifunctional Protein, Domain 2"/>
    <property type="match status" value="1"/>
</dbReference>
<dbReference type="Gene3D" id="3.30.390.50">
    <property type="entry name" value="CO dehydrogenase flavoprotein, C-terminal domain"/>
    <property type="match status" value="1"/>
</dbReference>
<dbReference type="HAMAP" id="MF_01602">
    <property type="entry name" value="LplA"/>
    <property type="match status" value="1"/>
</dbReference>
<dbReference type="InterPro" id="IPR045864">
    <property type="entry name" value="aa-tRNA-synth_II/BPL/LPL"/>
</dbReference>
<dbReference type="InterPro" id="IPR004143">
    <property type="entry name" value="BPL_LPL_catalytic"/>
</dbReference>
<dbReference type="InterPro" id="IPR023741">
    <property type="entry name" value="Lipoate_ligase_A"/>
</dbReference>
<dbReference type="InterPro" id="IPR019491">
    <property type="entry name" value="Lipoate_protein_ligase_C"/>
</dbReference>
<dbReference type="InterPro" id="IPR004562">
    <property type="entry name" value="LipoylTrfase_LipoateP_Ligase"/>
</dbReference>
<dbReference type="NCBIfam" id="TIGR00545">
    <property type="entry name" value="lipoyltrans"/>
    <property type="match status" value="1"/>
</dbReference>
<dbReference type="PANTHER" id="PTHR12561">
    <property type="entry name" value="LIPOATE-PROTEIN LIGASE"/>
    <property type="match status" value="1"/>
</dbReference>
<dbReference type="PANTHER" id="PTHR12561:SF3">
    <property type="entry name" value="LIPOYLTRANSFERASE 1, MITOCHONDRIAL"/>
    <property type="match status" value="1"/>
</dbReference>
<dbReference type="Pfam" id="PF10437">
    <property type="entry name" value="Lip_prot_lig_C"/>
    <property type="match status" value="1"/>
</dbReference>
<dbReference type="Pfam" id="PF21948">
    <property type="entry name" value="LplA-B_cat"/>
    <property type="match status" value="1"/>
</dbReference>
<dbReference type="SUPFAM" id="SSF55681">
    <property type="entry name" value="Class II aaRS and biotin synthetases"/>
    <property type="match status" value="1"/>
</dbReference>
<dbReference type="SUPFAM" id="SSF82649">
    <property type="entry name" value="SufE/NifU"/>
    <property type="match status" value="1"/>
</dbReference>
<dbReference type="PROSITE" id="PS51733">
    <property type="entry name" value="BPL_LPL_CATALYTIC"/>
    <property type="match status" value="1"/>
</dbReference>
<feature type="chain" id="PRO_1000148118" description="Lipoate-protein ligase A">
    <location>
        <begin position="1"/>
        <end position="338"/>
    </location>
</feature>
<feature type="domain" description="BPL/LPL catalytic" evidence="2">
    <location>
        <begin position="29"/>
        <end position="216"/>
    </location>
</feature>
<feature type="binding site" evidence="1">
    <location>
        <position position="71"/>
    </location>
    <ligand>
        <name>ATP</name>
        <dbReference type="ChEBI" id="CHEBI:30616"/>
    </ligand>
</feature>
<feature type="binding site" evidence="1">
    <location>
        <begin position="76"/>
        <end position="79"/>
    </location>
    <ligand>
        <name>ATP</name>
        <dbReference type="ChEBI" id="CHEBI:30616"/>
    </ligand>
</feature>
<feature type="binding site" evidence="1">
    <location>
        <position position="134"/>
    </location>
    <ligand>
        <name>(R)-lipoate</name>
        <dbReference type="ChEBI" id="CHEBI:83088"/>
    </ligand>
</feature>
<feature type="binding site" evidence="1">
    <location>
        <position position="134"/>
    </location>
    <ligand>
        <name>ATP</name>
        <dbReference type="ChEBI" id="CHEBI:30616"/>
    </ligand>
</feature>
<comment type="function">
    <text evidence="1">Catalyzes both the ATP-dependent activation of exogenously supplied lipoate to lipoyl-AMP and the transfer of the activated lipoyl onto the lipoyl domains of lipoate-dependent enzymes.</text>
</comment>
<comment type="catalytic activity">
    <reaction evidence="1">
        <text>L-lysyl-[lipoyl-carrier protein] + (R)-lipoate + ATP = N(6)-[(R)-lipoyl]-L-lysyl-[lipoyl-carrier protein] + AMP + diphosphate + H(+)</text>
        <dbReference type="Rhea" id="RHEA:49288"/>
        <dbReference type="Rhea" id="RHEA-COMP:10500"/>
        <dbReference type="Rhea" id="RHEA-COMP:10502"/>
        <dbReference type="ChEBI" id="CHEBI:15378"/>
        <dbReference type="ChEBI" id="CHEBI:29969"/>
        <dbReference type="ChEBI" id="CHEBI:30616"/>
        <dbReference type="ChEBI" id="CHEBI:33019"/>
        <dbReference type="ChEBI" id="CHEBI:83088"/>
        <dbReference type="ChEBI" id="CHEBI:83099"/>
        <dbReference type="ChEBI" id="CHEBI:456215"/>
        <dbReference type="EC" id="6.3.1.20"/>
    </reaction>
</comment>
<comment type="pathway">
    <text evidence="1">Protein modification; protein lipoylation via exogenous pathway; protein N(6)-(lipoyl)lysine from lipoate: step 1/2.</text>
</comment>
<comment type="pathway">
    <text evidence="1">Protein modification; protein lipoylation via exogenous pathway; protein N(6)-(lipoyl)lysine from lipoate: step 2/2.</text>
</comment>
<comment type="subunit">
    <text evidence="1">Monomer.</text>
</comment>
<comment type="subcellular location">
    <subcellularLocation>
        <location evidence="1">Cytoplasm</location>
    </subcellularLocation>
</comment>
<comment type="miscellaneous">
    <text evidence="1">In the transfer reaction, the free carboxyl group of lipoic acid is attached via an amide linkage to the epsilon-amino group of a specific lysine residue of lipoyl domains of lipoate-dependent enzymes.</text>
</comment>
<comment type="similarity">
    <text evidence="1">Belongs to the LplA family.</text>
</comment>
<evidence type="ECO:0000255" key="1">
    <source>
        <dbReference type="HAMAP-Rule" id="MF_01602"/>
    </source>
</evidence>
<evidence type="ECO:0000255" key="2">
    <source>
        <dbReference type="PROSITE-ProRule" id="PRU01067"/>
    </source>
</evidence>
<gene>
    <name evidence="1" type="primary">lplA</name>
    <name type="ordered locus">SbBS512_E4933</name>
</gene>
<proteinExistence type="inferred from homology"/>
<accession>B2TZR8</accession>
<name>LPLA_SHIB3</name>
<organism>
    <name type="scientific">Shigella boydii serotype 18 (strain CDC 3083-94 / BS512)</name>
    <dbReference type="NCBI Taxonomy" id="344609"/>
    <lineage>
        <taxon>Bacteria</taxon>
        <taxon>Pseudomonadati</taxon>
        <taxon>Pseudomonadota</taxon>
        <taxon>Gammaproteobacteria</taxon>
        <taxon>Enterobacterales</taxon>
        <taxon>Enterobacteriaceae</taxon>
        <taxon>Shigella</taxon>
    </lineage>
</organism>
<sequence>MSTLRLLISDSYDPWFNLAVEECIFRQMPATQRVLFLWRNADTVVIGRAQNPWKECNTRRMEEDNVRLARRSSGGGAVFHDLGNTCFTFMAGKPEYDKTISTSIVLNALNALGVSAEASGRNDLVVKTAEGDRKVSGSAYRETKDRGFHHGTLLLNADLSRLANYLNPDKKKLAAKGITSVRSRVTNLTELLPGITHEQVCEAITKAFFAHYGERVEAEIISPDKTPDLPNFAEIFARQSSWEWNFGQAPAFSHLLDERFSWGGVELHFDVEKGHITRAQVFTDSLNPAPLEALAGRLQGCLYRADMLQQECEALLVDFPDQEKELRELSTWIAGAVR</sequence>
<reference key="1">
    <citation type="submission" date="2008-05" db="EMBL/GenBank/DDBJ databases">
        <title>Complete sequence of Shigella boydii serotype 18 strain BS512.</title>
        <authorList>
            <person name="Rasko D.A."/>
            <person name="Rosovitz M."/>
            <person name="Maurelli A.T."/>
            <person name="Myers G."/>
            <person name="Seshadri R."/>
            <person name="Cer R."/>
            <person name="Jiang L."/>
            <person name="Ravel J."/>
            <person name="Sebastian Y."/>
        </authorList>
    </citation>
    <scope>NUCLEOTIDE SEQUENCE [LARGE SCALE GENOMIC DNA]</scope>
    <source>
        <strain>CDC 3083-94 / BS512</strain>
    </source>
</reference>
<keyword id="KW-0067">ATP-binding</keyword>
<keyword id="KW-0963">Cytoplasm</keyword>
<keyword id="KW-0436">Ligase</keyword>
<keyword id="KW-0547">Nucleotide-binding</keyword>
<keyword id="KW-1185">Reference proteome</keyword>